<name>PPIL4_CRYNJ</name>
<proteinExistence type="inferred from homology"/>
<evidence type="ECO:0000250" key="1"/>
<evidence type="ECO:0000255" key="2">
    <source>
        <dbReference type="PROSITE-ProRule" id="PRU00156"/>
    </source>
</evidence>
<evidence type="ECO:0000255" key="3">
    <source>
        <dbReference type="PROSITE-ProRule" id="PRU00176"/>
    </source>
</evidence>
<evidence type="ECO:0000256" key="4">
    <source>
        <dbReference type="SAM" id="MobiDB-lite"/>
    </source>
</evidence>
<evidence type="ECO:0000305" key="5"/>
<protein>
    <recommendedName>
        <fullName>Peptidyl-prolyl cis-trans isomerase-like 4</fullName>
        <shortName>PPIase</shortName>
        <ecNumber>5.2.1.8</ecNumber>
    </recommendedName>
    <alternativeName>
        <fullName>Rotamase</fullName>
    </alternativeName>
</protein>
<gene>
    <name type="primary">CYP6</name>
    <name type="ordered locus">CNA04870</name>
</gene>
<dbReference type="EC" id="5.2.1.8"/>
<dbReference type="EMBL" id="AE017341">
    <property type="protein sequence ID" value="AAW41108.1"/>
    <property type="molecule type" value="Genomic_DNA"/>
</dbReference>
<dbReference type="RefSeq" id="XP_566927.1">
    <property type="nucleotide sequence ID" value="XM_566927.1"/>
</dbReference>
<dbReference type="SMR" id="P0CP88"/>
<dbReference type="FunCoup" id="P0CP88">
    <property type="interactions" value="848"/>
</dbReference>
<dbReference type="STRING" id="214684.P0CP88"/>
<dbReference type="PaxDb" id="214684-P0CP88"/>
<dbReference type="EnsemblFungi" id="AAW41108">
    <property type="protein sequence ID" value="AAW41108"/>
    <property type="gene ID" value="CNA04870"/>
</dbReference>
<dbReference type="VEuPathDB" id="FungiDB:CNA04870"/>
<dbReference type="eggNOG" id="KOG0415">
    <property type="taxonomic scope" value="Eukaryota"/>
</dbReference>
<dbReference type="HOGENOM" id="CLU_018791_2_1_1"/>
<dbReference type="InParanoid" id="P0CP88"/>
<dbReference type="OMA" id="APKCCEN"/>
<dbReference type="OrthoDB" id="2083at2759"/>
<dbReference type="Proteomes" id="UP000002149">
    <property type="component" value="Chromosome 1"/>
</dbReference>
<dbReference type="GO" id="GO:0005634">
    <property type="term" value="C:nucleus"/>
    <property type="evidence" value="ECO:0000318"/>
    <property type="project" value="GO_Central"/>
</dbReference>
<dbReference type="GO" id="GO:0003755">
    <property type="term" value="F:peptidyl-prolyl cis-trans isomerase activity"/>
    <property type="evidence" value="ECO:0007669"/>
    <property type="project" value="UniProtKB-KW"/>
</dbReference>
<dbReference type="GO" id="GO:0003723">
    <property type="term" value="F:RNA binding"/>
    <property type="evidence" value="ECO:0007669"/>
    <property type="project" value="UniProtKB-KW"/>
</dbReference>
<dbReference type="CDD" id="cd01921">
    <property type="entry name" value="cyclophilin_RRM"/>
    <property type="match status" value="1"/>
</dbReference>
<dbReference type="CDD" id="cd12235">
    <property type="entry name" value="RRM_PPIL4"/>
    <property type="match status" value="1"/>
</dbReference>
<dbReference type="FunFam" id="2.40.100.10:FF:000015">
    <property type="entry name" value="Peptidyl-prolyl cis-trans isomerase"/>
    <property type="match status" value="1"/>
</dbReference>
<dbReference type="FunFam" id="3.30.70.330:FF:001637">
    <property type="entry name" value="Peptidyl-prolyl cis-trans isomerase-like 4"/>
    <property type="match status" value="1"/>
</dbReference>
<dbReference type="Gene3D" id="3.30.70.330">
    <property type="match status" value="1"/>
</dbReference>
<dbReference type="Gene3D" id="2.40.100.10">
    <property type="entry name" value="Cyclophilin-like"/>
    <property type="match status" value="1"/>
</dbReference>
<dbReference type="InterPro" id="IPR035542">
    <property type="entry name" value="CRIP"/>
</dbReference>
<dbReference type="InterPro" id="IPR029000">
    <property type="entry name" value="Cyclophilin-like_dom_sf"/>
</dbReference>
<dbReference type="InterPro" id="IPR002130">
    <property type="entry name" value="Cyclophilin-type_PPIase_dom"/>
</dbReference>
<dbReference type="InterPro" id="IPR035538">
    <property type="entry name" value="Cyclophilin_PPIL4"/>
</dbReference>
<dbReference type="InterPro" id="IPR012677">
    <property type="entry name" value="Nucleotide-bd_a/b_plait_sf"/>
</dbReference>
<dbReference type="InterPro" id="IPR035979">
    <property type="entry name" value="RBD_domain_sf"/>
</dbReference>
<dbReference type="InterPro" id="IPR000504">
    <property type="entry name" value="RRM_dom"/>
</dbReference>
<dbReference type="PANTHER" id="PTHR45843">
    <property type="entry name" value="PEPTIDYL-PROLYL CIS-TRANS ISOMERASE-LIKE 4"/>
    <property type="match status" value="1"/>
</dbReference>
<dbReference type="PANTHER" id="PTHR45843:SF1">
    <property type="entry name" value="PEPTIDYL-PROLYL CIS-TRANS ISOMERASE-LIKE 4"/>
    <property type="match status" value="1"/>
</dbReference>
<dbReference type="Pfam" id="PF00160">
    <property type="entry name" value="Pro_isomerase"/>
    <property type="match status" value="1"/>
</dbReference>
<dbReference type="Pfam" id="PF00076">
    <property type="entry name" value="RRM_1"/>
    <property type="match status" value="1"/>
</dbReference>
<dbReference type="PRINTS" id="PR00153">
    <property type="entry name" value="CSAPPISMRASE"/>
</dbReference>
<dbReference type="SMART" id="SM00360">
    <property type="entry name" value="RRM"/>
    <property type="match status" value="1"/>
</dbReference>
<dbReference type="SUPFAM" id="SSF50891">
    <property type="entry name" value="Cyclophilin-like"/>
    <property type="match status" value="1"/>
</dbReference>
<dbReference type="SUPFAM" id="SSF54928">
    <property type="entry name" value="RNA-binding domain, RBD"/>
    <property type="match status" value="1"/>
</dbReference>
<dbReference type="PROSITE" id="PS50072">
    <property type="entry name" value="CSA_PPIASE_2"/>
    <property type="match status" value="1"/>
</dbReference>
<dbReference type="PROSITE" id="PS50102">
    <property type="entry name" value="RRM"/>
    <property type="match status" value="1"/>
</dbReference>
<accession>P0CP88</accession>
<accession>Q55ZM2</accession>
<accession>Q5KNY5</accession>
<sequence>MSVMLETSLGDLIIDLEVDKCPRTCENFIKLCKLKYYALNAFFNVSKNFIAQSGDPTATGTGGESLASYVYSQSPSGPRPPRYFTPEILNSLKHTHKGTLSMAVAPINPPGCGSQFFITLADNIDYLDGKHAVFGHVIEGLDTLDKINDAFTDKEGRPLQNIRIRHVEILEDPFPDPDNFMPIPQSPIRPPDDLSKVRIADTEDPNAVIPEEEAEELRRRTEAASSALTLEMIGDLPFAAVRPPENILFVCKLNPVTQDEDLELIFSRFGKILSCEVVRDKKSGDSLQYAFIEFDEREAAEQAYFKMQNVLVDDRRIWVDFSQSVAKMNRSMLSSSNPTGRGGRGGRGGRGGNYSGRRDGDRDRDRDSGWSSRRDAPDSRRPPPPPVPMSSSRDVGGTEGYGLVFDDRSAPSSRGSKRDRERSPKRERDRERERDRSPRRDRDRERDRSPRRDRDRERDDHDRRDRDRNGRDRERNGDRERYRERSRERENERYRERDDRDRRR</sequence>
<reference key="1">
    <citation type="journal article" date="2005" name="Science">
        <title>The genome of the basidiomycetous yeast and human pathogen Cryptococcus neoformans.</title>
        <authorList>
            <person name="Loftus B.J."/>
            <person name="Fung E."/>
            <person name="Roncaglia P."/>
            <person name="Rowley D."/>
            <person name="Amedeo P."/>
            <person name="Bruno D."/>
            <person name="Vamathevan J."/>
            <person name="Miranda M."/>
            <person name="Anderson I.J."/>
            <person name="Fraser J.A."/>
            <person name="Allen J.E."/>
            <person name="Bosdet I.E."/>
            <person name="Brent M.R."/>
            <person name="Chiu R."/>
            <person name="Doering T.L."/>
            <person name="Donlin M.J."/>
            <person name="D'Souza C.A."/>
            <person name="Fox D.S."/>
            <person name="Grinberg V."/>
            <person name="Fu J."/>
            <person name="Fukushima M."/>
            <person name="Haas B.J."/>
            <person name="Huang J.C."/>
            <person name="Janbon G."/>
            <person name="Jones S.J.M."/>
            <person name="Koo H.L."/>
            <person name="Krzywinski M.I."/>
            <person name="Kwon-Chung K.J."/>
            <person name="Lengeler K.B."/>
            <person name="Maiti R."/>
            <person name="Marra M.A."/>
            <person name="Marra R.E."/>
            <person name="Mathewson C.A."/>
            <person name="Mitchell T.G."/>
            <person name="Pertea M."/>
            <person name="Riggs F.R."/>
            <person name="Salzberg S.L."/>
            <person name="Schein J.E."/>
            <person name="Shvartsbeyn A."/>
            <person name="Shin H."/>
            <person name="Shumway M."/>
            <person name="Specht C.A."/>
            <person name="Suh B.B."/>
            <person name="Tenney A."/>
            <person name="Utterback T.R."/>
            <person name="Wickes B.L."/>
            <person name="Wortman J.R."/>
            <person name="Wye N.H."/>
            <person name="Kronstad J.W."/>
            <person name="Lodge J.K."/>
            <person name="Heitman J."/>
            <person name="Davis R.W."/>
            <person name="Fraser C.M."/>
            <person name="Hyman R.W."/>
        </authorList>
    </citation>
    <scope>NUCLEOTIDE SEQUENCE [LARGE SCALE GENOMIC DNA]</scope>
    <source>
        <strain>JEC21 / ATCC MYA-565</strain>
    </source>
</reference>
<organism>
    <name type="scientific">Cryptococcus neoformans var. neoformans serotype D (strain JEC21 / ATCC MYA-565)</name>
    <name type="common">Filobasidiella neoformans</name>
    <dbReference type="NCBI Taxonomy" id="214684"/>
    <lineage>
        <taxon>Eukaryota</taxon>
        <taxon>Fungi</taxon>
        <taxon>Dikarya</taxon>
        <taxon>Basidiomycota</taxon>
        <taxon>Agaricomycotina</taxon>
        <taxon>Tremellomycetes</taxon>
        <taxon>Tremellales</taxon>
        <taxon>Cryptococcaceae</taxon>
        <taxon>Cryptococcus</taxon>
        <taxon>Cryptococcus neoformans species complex</taxon>
    </lineage>
</organism>
<comment type="function">
    <text evidence="1">PPIases accelerate the folding of proteins. It catalyzes the cis-trans isomerization of proline imidic peptide bonds in oligopeptides (By similarity).</text>
</comment>
<comment type="catalytic activity">
    <reaction>
        <text>[protein]-peptidylproline (omega=180) = [protein]-peptidylproline (omega=0)</text>
        <dbReference type="Rhea" id="RHEA:16237"/>
        <dbReference type="Rhea" id="RHEA-COMP:10747"/>
        <dbReference type="Rhea" id="RHEA-COMP:10748"/>
        <dbReference type="ChEBI" id="CHEBI:83833"/>
        <dbReference type="ChEBI" id="CHEBI:83834"/>
        <dbReference type="EC" id="5.2.1.8"/>
    </reaction>
</comment>
<comment type="subcellular location">
    <subcellularLocation>
        <location evidence="1">Nucleus</location>
    </subcellularLocation>
</comment>
<comment type="similarity">
    <text evidence="5">Belongs to the cyclophilin-type PPIase family. PPIL4 subfamily.</text>
</comment>
<keyword id="KW-0413">Isomerase</keyword>
<keyword id="KW-0539">Nucleus</keyword>
<keyword id="KW-1185">Reference proteome</keyword>
<keyword id="KW-0694">RNA-binding</keyword>
<keyword id="KW-0697">Rotamase</keyword>
<feature type="chain" id="PRO_0000232976" description="Peptidyl-prolyl cis-trans isomerase-like 4">
    <location>
        <begin position="1"/>
        <end position="504"/>
    </location>
</feature>
<feature type="domain" description="PPIase cyclophilin-type" evidence="2">
    <location>
        <begin position="1"/>
        <end position="169"/>
    </location>
</feature>
<feature type="domain" description="RRM" evidence="3">
    <location>
        <begin position="246"/>
        <end position="324"/>
    </location>
</feature>
<feature type="region of interest" description="Disordered" evidence="4">
    <location>
        <begin position="330"/>
        <end position="504"/>
    </location>
</feature>
<feature type="compositionally biased region" description="Polar residues" evidence="4">
    <location>
        <begin position="330"/>
        <end position="339"/>
    </location>
</feature>
<feature type="compositionally biased region" description="Gly residues" evidence="4">
    <location>
        <begin position="340"/>
        <end position="354"/>
    </location>
</feature>
<feature type="compositionally biased region" description="Basic and acidic residues" evidence="4">
    <location>
        <begin position="356"/>
        <end position="381"/>
    </location>
</feature>
<feature type="compositionally biased region" description="Basic and acidic residues" evidence="4">
    <location>
        <begin position="416"/>
        <end position="504"/>
    </location>
</feature>